<dbReference type="EMBL" id="CH476595">
    <property type="protein sequence ID" value="EAU38362.1"/>
    <property type="molecule type" value="Genomic_DNA"/>
</dbReference>
<dbReference type="RefSeq" id="XP_001208970.1">
    <property type="nucleotide sequence ID" value="XM_001208970.1"/>
</dbReference>
<dbReference type="SMR" id="Q0CXH9"/>
<dbReference type="STRING" id="341663.Q0CXH9"/>
<dbReference type="EnsemblFungi" id="EAU38362">
    <property type="protein sequence ID" value="EAU38362"/>
    <property type="gene ID" value="ATEG_01605"/>
</dbReference>
<dbReference type="GeneID" id="4315575"/>
<dbReference type="VEuPathDB" id="FungiDB:ATEG_01605"/>
<dbReference type="eggNOG" id="KOG0643">
    <property type="taxonomic scope" value="Eukaryota"/>
</dbReference>
<dbReference type="HOGENOM" id="CLU_043845_0_1_1"/>
<dbReference type="OMA" id="VWFSHNG"/>
<dbReference type="OrthoDB" id="24966at2759"/>
<dbReference type="Proteomes" id="UP000007963">
    <property type="component" value="Unassembled WGS sequence"/>
</dbReference>
<dbReference type="GO" id="GO:0016282">
    <property type="term" value="C:eukaryotic 43S preinitiation complex"/>
    <property type="evidence" value="ECO:0007669"/>
    <property type="project" value="UniProtKB-UniRule"/>
</dbReference>
<dbReference type="GO" id="GO:0033290">
    <property type="term" value="C:eukaryotic 48S preinitiation complex"/>
    <property type="evidence" value="ECO:0007669"/>
    <property type="project" value="UniProtKB-UniRule"/>
</dbReference>
<dbReference type="GO" id="GO:0071540">
    <property type="term" value="C:eukaryotic translation initiation factor 3 complex, eIF3e"/>
    <property type="evidence" value="ECO:0007669"/>
    <property type="project" value="EnsemblFungi"/>
</dbReference>
<dbReference type="GO" id="GO:0071541">
    <property type="term" value="C:eukaryotic translation initiation factor 3 complex, eIF3m"/>
    <property type="evidence" value="ECO:0007669"/>
    <property type="project" value="EnsemblFungi"/>
</dbReference>
<dbReference type="GO" id="GO:0034399">
    <property type="term" value="C:nuclear periphery"/>
    <property type="evidence" value="ECO:0007669"/>
    <property type="project" value="EnsemblFungi"/>
</dbReference>
<dbReference type="GO" id="GO:0003723">
    <property type="term" value="F:RNA binding"/>
    <property type="evidence" value="ECO:0007669"/>
    <property type="project" value="TreeGrafter"/>
</dbReference>
<dbReference type="GO" id="GO:0003743">
    <property type="term" value="F:translation initiation factor activity"/>
    <property type="evidence" value="ECO:0007669"/>
    <property type="project" value="UniProtKB-UniRule"/>
</dbReference>
<dbReference type="GO" id="GO:0001732">
    <property type="term" value="P:formation of cytoplasmic translation initiation complex"/>
    <property type="evidence" value="ECO:0007669"/>
    <property type="project" value="UniProtKB-UniRule"/>
</dbReference>
<dbReference type="FunFam" id="2.130.10.10:FF:000127">
    <property type="entry name" value="Eukaryotic translation initiation factor 3 subunit I"/>
    <property type="match status" value="1"/>
</dbReference>
<dbReference type="Gene3D" id="2.130.10.10">
    <property type="entry name" value="YVTN repeat-like/Quinoprotein amine dehydrogenase"/>
    <property type="match status" value="1"/>
</dbReference>
<dbReference type="HAMAP" id="MF_03008">
    <property type="entry name" value="eIF3i"/>
    <property type="match status" value="1"/>
</dbReference>
<dbReference type="InterPro" id="IPR027525">
    <property type="entry name" value="eIF3i"/>
</dbReference>
<dbReference type="InterPro" id="IPR015943">
    <property type="entry name" value="WD40/YVTN_repeat-like_dom_sf"/>
</dbReference>
<dbReference type="InterPro" id="IPR019775">
    <property type="entry name" value="WD40_repeat_CS"/>
</dbReference>
<dbReference type="InterPro" id="IPR036322">
    <property type="entry name" value="WD40_repeat_dom_sf"/>
</dbReference>
<dbReference type="InterPro" id="IPR001680">
    <property type="entry name" value="WD40_rpt"/>
</dbReference>
<dbReference type="PANTHER" id="PTHR19877">
    <property type="entry name" value="EUKARYOTIC TRANSLATION INITIATION FACTOR 3 SUBUNIT I"/>
    <property type="match status" value="1"/>
</dbReference>
<dbReference type="PANTHER" id="PTHR19877:SF1">
    <property type="entry name" value="EUKARYOTIC TRANSLATION INITIATION FACTOR 3 SUBUNIT I"/>
    <property type="match status" value="1"/>
</dbReference>
<dbReference type="Pfam" id="PF24805">
    <property type="entry name" value="EIF3I"/>
    <property type="match status" value="1"/>
</dbReference>
<dbReference type="SMART" id="SM00320">
    <property type="entry name" value="WD40"/>
    <property type="match status" value="6"/>
</dbReference>
<dbReference type="SUPFAM" id="SSF50978">
    <property type="entry name" value="WD40 repeat-like"/>
    <property type="match status" value="1"/>
</dbReference>
<dbReference type="PROSITE" id="PS00678">
    <property type="entry name" value="WD_REPEATS_1"/>
    <property type="match status" value="1"/>
</dbReference>
<dbReference type="PROSITE" id="PS50082">
    <property type="entry name" value="WD_REPEATS_2"/>
    <property type="match status" value="3"/>
</dbReference>
<dbReference type="PROSITE" id="PS50294">
    <property type="entry name" value="WD_REPEATS_REGION"/>
    <property type="match status" value="2"/>
</dbReference>
<keyword id="KW-0963">Cytoplasm</keyword>
<keyword id="KW-0396">Initiation factor</keyword>
<keyword id="KW-0648">Protein biosynthesis</keyword>
<keyword id="KW-1185">Reference proteome</keyword>
<keyword id="KW-0677">Repeat</keyword>
<keyword id="KW-0853">WD repeat</keyword>
<gene>
    <name type="primary">tif34</name>
    <name type="ORF">ATEG_01605</name>
</gene>
<accession>Q0CXH9</accession>
<organism>
    <name type="scientific">Aspergillus terreus (strain NIH 2624 / FGSC A1156)</name>
    <dbReference type="NCBI Taxonomy" id="341663"/>
    <lineage>
        <taxon>Eukaryota</taxon>
        <taxon>Fungi</taxon>
        <taxon>Dikarya</taxon>
        <taxon>Ascomycota</taxon>
        <taxon>Pezizomycotina</taxon>
        <taxon>Eurotiomycetes</taxon>
        <taxon>Eurotiomycetidae</taxon>
        <taxon>Eurotiales</taxon>
        <taxon>Aspergillaceae</taxon>
        <taxon>Aspergillus</taxon>
        <taxon>Aspergillus subgen. Circumdati</taxon>
    </lineage>
</organism>
<feature type="chain" id="PRO_0000365360" description="Eukaryotic translation initiation factor 3 subunit I">
    <location>
        <begin position="1"/>
        <end position="336"/>
    </location>
</feature>
<feature type="repeat" description="WD 1">
    <location>
        <begin position="8"/>
        <end position="47"/>
    </location>
</feature>
<feature type="repeat" description="WD 2">
    <location>
        <begin position="50"/>
        <end position="91"/>
    </location>
</feature>
<feature type="repeat" description="WD 3">
    <location>
        <begin position="146"/>
        <end position="185"/>
    </location>
</feature>
<feature type="repeat" description="WD 4">
    <location>
        <begin position="190"/>
        <end position="229"/>
    </location>
</feature>
<feature type="repeat" description="WD 5">
    <location>
        <begin position="287"/>
        <end position="326"/>
    </location>
</feature>
<protein>
    <recommendedName>
        <fullName evidence="1">Eukaryotic translation initiation factor 3 subunit I</fullName>
        <shortName evidence="1">eIF3i</shortName>
    </recommendedName>
    <alternativeName>
        <fullName evidence="1">Eukaryotic translation initiation factor 3 39 kDa subunit homolog</fullName>
        <shortName evidence="1">eIF-3 39 kDa subunit homolog</shortName>
    </alternativeName>
</protein>
<name>EIF3I_ASPTN</name>
<sequence length="336" mass="37438">MRPILLSGHERSLTQIKFNRDGDLLFSVSKDKIVCAWWTANGERLGTYNGHLGAVWTVDVSPNTVLLATGSADNSVRLWNVKTGECVKVWEFPTAVKRVEFSPDGSQLLAVTEKRMGFLGAISVLDISYEDNFQNQADEPSLRITCNESKATVAGWSYLGKYIIAGHEDGSVSQYDAKTGDQLENVQAHEFDHQINDIQFSADRTYFITASKDKSAKLISSRNLAILKTYVADTPLNSATITPKKDYVILGGGQAAMDVTTTSARQGKFEARFYHKVFEDEIGRVRGHFGPLNTVGVHPNGTAYASGGEDGYVRVHHFDKPYFDFMYEVEREQMRK</sequence>
<evidence type="ECO:0000255" key="1">
    <source>
        <dbReference type="HAMAP-Rule" id="MF_03008"/>
    </source>
</evidence>
<comment type="function">
    <text evidence="1">Component of the eukaryotic translation initiation factor 3 (eIF-3) complex, which is involved in protein synthesis of a specialized repertoire of mRNAs and, together with other initiation factors, stimulates binding of mRNA and methionyl-tRNAi to the 40S ribosome. The eIF-3 complex specifically targets and initiates translation of a subset of mRNAs involved in cell proliferation.</text>
</comment>
<comment type="subunit">
    <text evidence="1">Component of the eukaryotic translation initiation factor 3 (eIF-3) complex.</text>
</comment>
<comment type="subcellular location">
    <subcellularLocation>
        <location evidence="1">Cytoplasm</location>
    </subcellularLocation>
</comment>
<comment type="similarity">
    <text evidence="1">Belongs to the eIF-3 subunit I family.</text>
</comment>
<proteinExistence type="inferred from homology"/>
<reference key="1">
    <citation type="submission" date="2005-09" db="EMBL/GenBank/DDBJ databases">
        <title>Annotation of the Aspergillus terreus NIH2624 genome.</title>
        <authorList>
            <person name="Birren B.W."/>
            <person name="Lander E.S."/>
            <person name="Galagan J.E."/>
            <person name="Nusbaum C."/>
            <person name="Devon K."/>
            <person name="Henn M."/>
            <person name="Ma L.-J."/>
            <person name="Jaffe D.B."/>
            <person name="Butler J."/>
            <person name="Alvarez P."/>
            <person name="Gnerre S."/>
            <person name="Grabherr M."/>
            <person name="Kleber M."/>
            <person name="Mauceli E.W."/>
            <person name="Brockman W."/>
            <person name="Rounsley S."/>
            <person name="Young S.K."/>
            <person name="LaButti K."/>
            <person name="Pushparaj V."/>
            <person name="DeCaprio D."/>
            <person name="Crawford M."/>
            <person name="Koehrsen M."/>
            <person name="Engels R."/>
            <person name="Montgomery P."/>
            <person name="Pearson M."/>
            <person name="Howarth C."/>
            <person name="Larson L."/>
            <person name="Luoma S."/>
            <person name="White J."/>
            <person name="Alvarado L."/>
            <person name="Kodira C.D."/>
            <person name="Zeng Q."/>
            <person name="Oleary S."/>
            <person name="Yandava C."/>
            <person name="Denning D.W."/>
            <person name="Nierman W.C."/>
            <person name="Milne T."/>
            <person name="Madden K."/>
        </authorList>
    </citation>
    <scope>NUCLEOTIDE SEQUENCE [LARGE SCALE GENOMIC DNA]</scope>
    <source>
        <strain>NIH 2624 / FGSC A1156</strain>
    </source>
</reference>